<feature type="chain" id="PRO_1000078291" description="Adenylate kinase">
    <location>
        <begin position="1"/>
        <end position="214"/>
    </location>
</feature>
<feature type="region of interest" description="NMP" evidence="1">
    <location>
        <begin position="30"/>
        <end position="59"/>
    </location>
</feature>
<feature type="region of interest" description="LID" evidence="1">
    <location>
        <begin position="122"/>
        <end position="159"/>
    </location>
</feature>
<feature type="binding site" evidence="1">
    <location>
        <begin position="10"/>
        <end position="15"/>
    </location>
    <ligand>
        <name>ATP</name>
        <dbReference type="ChEBI" id="CHEBI:30616"/>
    </ligand>
</feature>
<feature type="binding site" evidence="1">
    <location>
        <position position="31"/>
    </location>
    <ligand>
        <name>AMP</name>
        <dbReference type="ChEBI" id="CHEBI:456215"/>
    </ligand>
</feature>
<feature type="binding site" evidence="1">
    <location>
        <position position="36"/>
    </location>
    <ligand>
        <name>AMP</name>
        <dbReference type="ChEBI" id="CHEBI:456215"/>
    </ligand>
</feature>
<feature type="binding site" evidence="1">
    <location>
        <begin position="57"/>
        <end position="59"/>
    </location>
    <ligand>
        <name>AMP</name>
        <dbReference type="ChEBI" id="CHEBI:456215"/>
    </ligand>
</feature>
<feature type="binding site" evidence="1">
    <location>
        <begin position="85"/>
        <end position="88"/>
    </location>
    <ligand>
        <name>AMP</name>
        <dbReference type="ChEBI" id="CHEBI:456215"/>
    </ligand>
</feature>
<feature type="binding site" evidence="1">
    <location>
        <position position="92"/>
    </location>
    <ligand>
        <name>AMP</name>
        <dbReference type="ChEBI" id="CHEBI:456215"/>
    </ligand>
</feature>
<feature type="binding site" evidence="1">
    <location>
        <position position="123"/>
    </location>
    <ligand>
        <name>ATP</name>
        <dbReference type="ChEBI" id="CHEBI:30616"/>
    </ligand>
</feature>
<feature type="binding site" evidence="1">
    <location>
        <begin position="132"/>
        <end position="133"/>
    </location>
    <ligand>
        <name>ATP</name>
        <dbReference type="ChEBI" id="CHEBI:30616"/>
    </ligand>
</feature>
<feature type="binding site" evidence="1">
    <location>
        <position position="156"/>
    </location>
    <ligand>
        <name>AMP</name>
        <dbReference type="ChEBI" id="CHEBI:456215"/>
    </ligand>
</feature>
<feature type="binding site" evidence="1">
    <location>
        <position position="167"/>
    </location>
    <ligand>
        <name>AMP</name>
        <dbReference type="ChEBI" id="CHEBI:456215"/>
    </ligand>
</feature>
<feature type="binding site" evidence="1">
    <location>
        <position position="200"/>
    </location>
    <ligand>
        <name>ATP</name>
        <dbReference type="ChEBI" id="CHEBI:30616"/>
    </ligand>
</feature>
<dbReference type="EC" id="2.7.4.3" evidence="1"/>
<dbReference type="EMBL" id="CP000931">
    <property type="protein sequence ID" value="ABZ76164.1"/>
    <property type="molecule type" value="Genomic_DNA"/>
</dbReference>
<dbReference type="RefSeq" id="WP_012276702.1">
    <property type="nucleotide sequence ID" value="NC_010334.1"/>
</dbReference>
<dbReference type="SMR" id="B0TP07"/>
<dbReference type="STRING" id="458817.Shal_1598"/>
<dbReference type="KEGG" id="shl:Shal_1598"/>
<dbReference type="eggNOG" id="COG0563">
    <property type="taxonomic scope" value="Bacteria"/>
</dbReference>
<dbReference type="HOGENOM" id="CLU_032354_1_2_6"/>
<dbReference type="OrthoDB" id="9805030at2"/>
<dbReference type="UniPathway" id="UPA00588">
    <property type="reaction ID" value="UER00649"/>
</dbReference>
<dbReference type="Proteomes" id="UP000001317">
    <property type="component" value="Chromosome"/>
</dbReference>
<dbReference type="GO" id="GO:0005737">
    <property type="term" value="C:cytoplasm"/>
    <property type="evidence" value="ECO:0007669"/>
    <property type="project" value="UniProtKB-SubCell"/>
</dbReference>
<dbReference type="GO" id="GO:0004017">
    <property type="term" value="F:adenylate kinase activity"/>
    <property type="evidence" value="ECO:0007669"/>
    <property type="project" value="UniProtKB-UniRule"/>
</dbReference>
<dbReference type="GO" id="GO:0005524">
    <property type="term" value="F:ATP binding"/>
    <property type="evidence" value="ECO:0007669"/>
    <property type="project" value="UniProtKB-UniRule"/>
</dbReference>
<dbReference type="GO" id="GO:0044209">
    <property type="term" value="P:AMP salvage"/>
    <property type="evidence" value="ECO:0007669"/>
    <property type="project" value="UniProtKB-UniRule"/>
</dbReference>
<dbReference type="CDD" id="cd01428">
    <property type="entry name" value="ADK"/>
    <property type="match status" value="1"/>
</dbReference>
<dbReference type="FunFam" id="3.40.50.300:FF:000106">
    <property type="entry name" value="Adenylate kinase mitochondrial"/>
    <property type="match status" value="1"/>
</dbReference>
<dbReference type="Gene3D" id="3.40.50.300">
    <property type="entry name" value="P-loop containing nucleotide triphosphate hydrolases"/>
    <property type="match status" value="1"/>
</dbReference>
<dbReference type="HAMAP" id="MF_00235">
    <property type="entry name" value="Adenylate_kinase_Adk"/>
    <property type="match status" value="1"/>
</dbReference>
<dbReference type="InterPro" id="IPR006259">
    <property type="entry name" value="Adenyl_kin_sub"/>
</dbReference>
<dbReference type="InterPro" id="IPR000850">
    <property type="entry name" value="Adenylat/UMP-CMP_kin"/>
</dbReference>
<dbReference type="InterPro" id="IPR033690">
    <property type="entry name" value="Adenylat_kinase_CS"/>
</dbReference>
<dbReference type="InterPro" id="IPR007862">
    <property type="entry name" value="Adenylate_kinase_lid-dom"/>
</dbReference>
<dbReference type="InterPro" id="IPR027417">
    <property type="entry name" value="P-loop_NTPase"/>
</dbReference>
<dbReference type="NCBIfam" id="TIGR01351">
    <property type="entry name" value="adk"/>
    <property type="match status" value="1"/>
</dbReference>
<dbReference type="NCBIfam" id="NF001379">
    <property type="entry name" value="PRK00279.1-1"/>
    <property type="match status" value="1"/>
</dbReference>
<dbReference type="NCBIfam" id="NF001380">
    <property type="entry name" value="PRK00279.1-2"/>
    <property type="match status" value="1"/>
</dbReference>
<dbReference type="NCBIfam" id="NF001381">
    <property type="entry name" value="PRK00279.1-3"/>
    <property type="match status" value="1"/>
</dbReference>
<dbReference type="PANTHER" id="PTHR23359">
    <property type="entry name" value="NUCLEOTIDE KINASE"/>
    <property type="match status" value="1"/>
</dbReference>
<dbReference type="Pfam" id="PF00406">
    <property type="entry name" value="ADK"/>
    <property type="match status" value="1"/>
</dbReference>
<dbReference type="Pfam" id="PF05191">
    <property type="entry name" value="ADK_lid"/>
    <property type="match status" value="1"/>
</dbReference>
<dbReference type="PRINTS" id="PR00094">
    <property type="entry name" value="ADENYLTKNASE"/>
</dbReference>
<dbReference type="SUPFAM" id="SSF52540">
    <property type="entry name" value="P-loop containing nucleoside triphosphate hydrolases"/>
    <property type="match status" value="1"/>
</dbReference>
<dbReference type="PROSITE" id="PS00113">
    <property type="entry name" value="ADENYLATE_KINASE"/>
    <property type="match status" value="1"/>
</dbReference>
<gene>
    <name evidence="1" type="primary">adk</name>
    <name type="ordered locus">Shal_1598</name>
</gene>
<name>KAD_SHEHH</name>
<organism>
    <name type="scientific">Shewanella halifaxensis (strain HAW-EB4)</name>
    <dbReference type="NCBI Taxonomy" id="458817"/>
    <lineage>
        <taxon>Bacteria</taxon>
        <taxon>Pseudomonadati</taxon>
        <taxon>Pseudomonadota</taxon>
        <taxon>Gammaproteobacteria</taxon>
        <taxon>Alteromonadales</taxon>
        <taxon>Shewanellaceae</taxon>
        <taxon>Shewanella</taxon>
    </lineage>
</organism>
<evidence type="ECO:0000255" key="1">
    <source>
        <dbReference type="HAMAP-Rule" id="MF_00235"/>
    </source>
</evidence>
<protein>
    <recommendedName>
        <fullName evidence="1">Adenylate kinase</fullName>
        <shortName evidence="1">AK</shortName>
        <ecNumber evidence="1">2.7.4.3</ecNumber>
    </recommendedName>
    <alternativeName>
        <fullName evidence="1">ATP-AMP transphosphorylase</fullName>
    </alternativeName>
    <alternativeName>
        <fullName evidence="1">ATP:AMP phosphotransferase</fullName>
    </alternativeName>
    <alternativeName>
        <fullName evidence="1">Adenylate monophosphate kinase</fullName>
    </alternativeName>
</protein>
<proteinExistence type="inferred from homology"/>
<reference key="1">
    <citation type="submission" date="2008-01" db="EMBL/GenBank/DDBJ databases">
        <title>Complete sequence of Shewanella halifaxensis HAW-EB4.</title>
        <authorList>
            <consortium name="US DOE Joint Genome Institute"/>
            <person name="Copeland A."/>
            <person name="Lucas S."/>
            <person name="Lapidus A."/>
            <person name="Glavina del Rio T."/>
            <person name="Dalin E."/>
            <person name="Tice H."/>
            <person name="Bruce D."/>
            <person name="Goodwin L."/>
            <person name="Pitluck S."/>
            <person name="Sims D."/>
            <person name="Brettin T."/>
            <person name="Detter J.C."/>
            <person name="Han C."/>
            <person name="Kuske C.R."/>
            <person name="Schmutz J."/>
            <person name="Larimer F."/>
            <person name="Land M."/>
            <person name="Hauser L."/>
            <person name="Kyrpides N."/>
            <person name="Kim E."/>
            <person name="Zhao J.-S."/>
            <person name="Richardson P."/>
        </authorList>
    </citation>
    <scope>NUCLEOTIDE SEQUENCE [LARGE SCALE GENOMIC DNA]</scope>
    <source>
        <strain>HAW-EB4</strain>
    </source>
</reference>
<accession>B0TP07</accession>
<comment type="function">
    <text evidence="1">Catalyzes the reversible transfer of the terminal phosphate group between ATP and AMP. Plays an important role in cellular energy homeostasis and in adenine nucleotide metabolism.</text>
</comment>
<comment type="catalytic activity">
    <reaction evidence="1">
        <text>AMP + ATP = 2 ADP</text>
        <dbReference type="Rhea" id="RHEA:12973"/>
        <dbReference type="ChEBI" id="CHEBI:30616"/>
        <dbReference type="ChEBI" id="CHEBI:456215"/>
        <dbReference type="ChEBI" id="CHEBI:456216"/>
        <dbReference type="EC" id="2.7.4.3"/>
    </reaction>
</comment>
<comment type="pathway">
    <text evidence="1">Purine metabolism; AMP biosynthesis via salvage pathway; AMP from ADP: step 1/1.</text>
</comment>
<comment type="subunit">
    <text evidence="1">Monomer.</text>
</comment>
<comment type="subcellular location">
    <subcellularLocation>
        <location evidence="1">Cytoplasm</location>
    </subcellularLocation>
</comment>
<comment type="domain">
    <text evidence="1">Consists of three domains, a large central CORE domain and two small peripheral domains, NMPbind and LID, which undergo movements during catalysis. The LID domain closes over the site of phosphoryl transfer upon ATP binding. Assembling and dissambling the active center during each catalytic cycle provides an effective means to prevent ATP hydrolysis.</text>
</comment>
<comment type="similarity">
    <text evidence="1">Belongs to the adenylate kinase family.</text>
</comment>
<keyword id="KW-0067">ATP-binding</keyword>
<keyword id="KW-0963">Cytoplasm</keyword>
<keyword id="KW-0418">Kinase</keyword>
<keyword id="KW-0545">Nucleotide biosynthesis</keyword>
<keyword id="KW-0547">Nucleotide-binding</keyword>
<keyword id="KW-0808">Transferase</keyword>
<sequence length="214" mass="23069">MRIMLLGAPGAGKGTQAQFIMEKYGVPQISTGDMLRAAVKAGTPLGLEAKKVMDAGQLVSDELIIGLVKERVAQDDCAAGFLLDGFPRTIPQADAMASSGIALDHVIEIDVPDEEIVKRMSGRRVHPGSGRVYHIVFNQPKVEGKDDVTGEDLAIRPDDEESTVRKRLDIYHEQTKPLVEYYGAVAAKGDVTYNKFDGTQSVATVSDEIVAVLS</sequence>